<evidence type="ECO:0000255" key="1">
    <source>
        <dbReference type="PROSITE-ProRule" id="PRU00047"/>
    </source>
</evidence>
<evidence type="ECO:0000256" key="2">
    <source>
        <dbReference type="SAM" id="MobiDB-lite"/>
    </source>
</evidence>
<evidence type="ECO:0000269" key="3">
    <source>
    </source>
</evidence>
<evidence type="ECO:0000269" key="4">
    <source>
    </source>
</evidence>
<evidence type="ECO:0000303" key="5">
    <source>
    </source>
</evidence>
<evidence type="ECO:0000305" key="6"/>
<evidence type="ECO:0000312" key="7">
    <source>
        <dbReference type="EMBL" id="AAL39452.1"/>
    </source>
</evidence>
<evidence type="ECO:0000312" key="8">
    <source>
        <dbReference type="FlyBase" id="FBgn0086912"/>
    </source>
</evidence>
<evidence type="ECO:0000312" key="9">
    <source>
        <dbReference type="Proteomes" id="UP000000803"/>
    </source>
</evidence>
<keyword id="KW-0963">Cytoplasm</keyword>
<keyword id="KW-0479">Metal-binding</keyword>
<keyword id="KW-0539">Nucleus</keyword>
<keyword id="KW-0597">Phosphoprotein</keyword>
<keyword id="KW-1185">Reference proteome</keyword>
<keyword id="KW-0677">Repeat</keyword>
<keyword id="KW-0862">Zinc</keyword>
<keyword id="KW-0863">Zinc-finger</keyword>
<proteinExistence type="evidence at protein level"/>
<organism evidence="9">
    <name type="scientific">Drosophila melanogaster</name>
    <name type="common">Fruit fly</name>
    <dbReference type="NCBI Taxonomy" id="7227"/>
    <lineage>
        <taxon>Eukaryota</taxon>
        <taxon>Metazoa</taxon>
        <taxon>Ecdysozoa</taxon>
        <taxon>Arthropoda</taxon>
        <taxon>Hexapoda</taxon>
        <taxon>Insecta</taxon>
        <taxon>Pterygota</taxon>
        <taxon>Neoptera</taxon>
        <taxon>Endopterygota</taxon>
        <taxon>Diptera</taxon>
        <taxon>Brachycera</taxon>
        <taxon>Muscomorpha</taxon>
        <taxon>Ephydroidea</taxon>
        <taxon>Drosophilidae</taxon>
        <taxon>Drosophila</taxon>
        <taxon>Sophophora</taxon>
    </lineage>
</organism>
<feature type="chain" id="PRO_0000436781" description="Protein mushroom body miniature">
    <location>
        <begin position="1"/>
        <end position="539"/>
    </location>
</feature>
<feature type="zinc finger region" description="CCHC-type 1" evidence="1">
    <location>
        <begin position="354"/>
        <end position="367"/>
    </location>
</feature>
<feature type="zinc finger region" description="CCHC-type 2" evidence="1">
    <location>
        <begin position="371"/>
        <end position="386"/>
    </location>
</feature>
<feature type="region of interest" description="Disordered" evidence="2">
    <location>
        <begin position="1"/>
        <end position="345"/>
    </location>
</feature>
<feature type="region of interest" description="Disordered" evidence="2">
    <location>
        <begin position="421"/>
        <end position="513"/>
    </location>
</feature>
<feature type="compositionally biased region" description="Polar residues" evidence="2">
    <location>
        <begin position="1"/>
        <end position="11"/>
    </location>
</feature>
<feature type="compositionally biased region" description="Basic and acidic residues" evidence="2">
    <location>
        <begin position="67"/>
        <end position="79"/>
    </location>
</feature>
<feature type="compositionally biased region" description="Basic residues" evidence="2">
    <location>
        <begin position="80"/>
        <end position="89"/>
    </location>
</feature>
<feature type="compositionally biased region" description="Gly residues" evidence="2">
    <location>
        <begin position="90"/>
        <end position="101"/>
    </location>
</feature>
<feature type="compositionally biased region" description="Basic and acidic residues" evidence="2">
    <location>
        <begin position="199"/>
        <end position="208"/>
    </location>
</feature>
<feature type="compositionally biased region" description="Low complexity" evidence="2">
    <location>
        <begin position="268"/>
        <end position="289"/>
    </location>
</feature>
<feature type="compositionally biased region" description="Acidic residues" evidence="2">
    <location>
        <begin position="327"/>
        <end position="336"/>
    </location>
</feature>
<feature type="compositionally biased region" description="Basic residues" evidence="2">
    <location>
        <begin position="428"/>
        <end position="447"/>
    </location>
</feature>
<feature type="compositionally biased region" description="Acidic residues" evidence="2">
    <location>
        <begin position="456"/>
        <end position="480"/>
    </location>
</feature>
<feature type="modified residue" description="Phosphoserine" evidence="4">
    <location>
        <position position="288"/>
    </location>
</feature>
<feature type="modified residue" description="Phosphoserine" evidence="4">
    <location>
        <position position="290"/>
    </location>
</feature>
<feature type="modified residue" description="Phosphothreonine" evidence="4">
    <location>
        <position position="292"/>
    </location>
</feature>
<feature type="modified residue" description="Phosphothreonine" evidence="4">
    <location>
        <position position="327"/>
    </location>
</feature>
<feature type="modified residue" description="Phosphoserine" evidence="4">
    <location>
        <position position="332"/>
    </location>
</feature>
<feature type="modified residue" description="Phosphothreonine" evidence="4">
    <location>
        <position position="333"/>
    </location>
</feature>
<feature type="mutagenesis site" description="Strongly reduced in vitro phosphorylation by CkIIalpha; when associated with A-290 and A-292." evidence="4">
    <original>S</original>
    <variation>A</variation>
    <location>
        <position position="288"/>
    </location>
</feature>
<feature type="mutagenesis site" description="Strongly reduced in vitro phosphorylation by CkIIalpha; when associated with A-288 and A-292." evidence="4">
    <original>S</original>
    <variation>A</variation>
    <location>
        <position position="290"/>
    </location>
</feature>
<feature type="mutagenesis site" description="Strongly reduced in vitro phosphorylation by CkIIalpha; when associated with A-288 and A-290." evidence="4">
    <original>T</original>
    <variation>A</variation>
    <location>
        <position position="292"/>
    </location>
</feature>
<feature type="mutagenesis site" description="Minor reduction of in vitro phosphorylation by CkIIalpha; when associated with A-332 and A-333." evidence="4">
    <original>T</original>
    <variation>A</variation>
    <location>
        <position position="327"/>
    </location>
</feature>
<feature type="mutagenesis site" description="Minor reduction of in vitro phosphorylation by CkIIalpha; when associated with A-327 and A-333." evidence="4">
    <original>S</original>
    <variation>A</variation>
    <location>
        <position position="332"/>
    </location>
</feature>
<feature type="mutagenesis site" description="Minor reduction of in vitro phosphorylation by CkIIalpha; when associated with A-327 and A-332." evidence="4">
    <original>T</original>
    <variation>A</variation>
    <location>
        <position position="333"/>
    </location>
</feature>
<sequence length="539" mass="58629">MHNSGGQSGWNLSGEERKPFSNYGRNNQQRRSSGGGGRGSHSQNRAANGNWPDAGSEGGQNGNAFNKFRDPQQELDNHQPNKRGGRRNRGGGGGGGGWGGRRGNRGRDSNRRGGRNNSWQPKDQHVSPGQSNMLYFDNVGDFTEDPPLPRSSPAPSSLRQESLPPVTFAADLTPPPPVSVAPPDVAVTPEEPTVPLINIKKEKEMEHKSKIKQFVKAEPKSPKKKKVNSSRSSSTSGEESEPEPGEMVVNTKAVVVPSPKAKAIKTPVASTPKPKAVKPVSSSDSSTSDSDTDDEQSHPPAKSKKMEKNTEEDVVCMGSQERQFTITDEEESTEPEDDKKARKQKNKGKTVDVCGICDKKGHTSFQCQMICRNCSGSYHGLKNCPNPPNLNIAIQSFVEFAMQQMTAFHCEQGFGFPAGTVTAPVSAKPKKDKKASIKKIKKSSQKRMKVEPKDHDEEDDEEDDDEDEDDSSESDDSESSEEPHPAPVSKQKRKRGTKASVSAAASLPPQVFPFPLLGAPGAPFNSMMYSYRAPFNFSK</sequence>
<accession>Q9VPM5</accession>
<dbReference type="EMBL" id="AE014134">
    <property type="protein sequence ID" value="AAF51521.1"/>
    <property type="molecule type" value="Genomic_DNA"/>
</dbReference>
<dbReference type="EMBL" id="AY069307">
    <property type="protein sequence ID" value="AAL39452.1"/>
    <property type="molecule type" value="mRNA"/>
</dbReference>
<dbReference type="RefSeq" id="NP_608511.1">
    <property type="nucleotide sequence ID" value="NM_134667.5"/>
</dbReference>
<dbReference type="FunCoup" id="Q9VPM5">
    <property type="interactions" value="92"/>
</dbReference>
<dbReference type="IntAct" id="Q9VPM5">
    <property type="interactions" value="15"/>
</dbReference>
<dbReference type="STRING" id="7227.FBpp0077798"/>
<dbReference type="GlyGen" id="Q9VPM5">
    <property type="glycosylation" value="1 site"/>
</dbReference>
<dbReference type="iPTMnet" id="Q9VPM5"/>
<dbReference type="PaxDb" id="7227-FBpp0077798"/>
<dbReference type="DNASU" id="33194"/>
<dbReference type="EnsemblMetazoa" id="FBtr0078139">
    <property type="protein sequence ID" value="FBpp0077798"/>
    <property type="gene ID" value="FBgn0086912"/>
</dbReference>
<dbReference type="GeneID" id="33194"/>
<dbReference type="KEGG" id="dme:Dmel_CG11604"/>
<dbReference type="UCSC" id="CG11604-RA">
    <property type="organism name" value="d. melanogaster"/>
</dbReference>
<dbReference type="AGR" id="FB:FBgn0086912"/>
<dbReference type="CTD" id="33194"/>
<dbReference type="FlyBase" id="FBgn0086912">
    <property type="gene designation" value="mbm"/>
</dbReference>
<dbReference type="VEuPathDB" id="VectorBase:FBgn0086912"/>
<dbReference type="eggNOG" id="ENOG502SB0T">
    <property type="taxonomic scope" value="Eukaryota"/>
</dbReference>
<dbReference type="HOGENOM" id="CLU_490280_0_0_1"/>
<dbReference type="InParanoid" id="Q9VPM5"/>
<dbReference type="OMA" id="FECQMIC"/>
<dbReference type="OrthoDB" id="8026949at2759"/>
<dbReference type="PhylomeDB" id="Q9VPM5"/>
<dbReference type="BioGRID-ORCS" id="33194">
    <property type="hits" value="0 hits in 1 CRISPR screen"/>
</dbReference>
<dbReference type="GenomeRNAi" id="33194"/>
<dbReference type="PRO" id="PR:Q9VPM5"/>
<dbReference type="Proteomes" id="UP000000803">
    <property type="component" value="Chromosome 2L"/>
</dbReference>
<dbReference type="Bgee" id="FBgn0086912">
    <property type="expression patterns" value="Expressed in posterior terminal follicle cell in ovary and 99 other cell types or tissues"/>
</dbReference>
<dbReference type="GO" id="GO:0005737">
    <property type="term" value="C:cytoplasm"/>
    <property type="evidence" value="ECO:0000314"/>
    <property type="project" value="UniProtKB"/>
</dbReference>
<dbReference type="GO" id="GO:0005730">
    <property type="term" value="C:nucleolus"/>
    <property type="evidence" value="ECO:0000314"/>
    <property type="project" value="UniProtKB"/>
</dbReference>
<dbReference type="GO" id="GO:0005634">
    <property type="term" value="C:nucleus"/>
    <property type="evidence" value="ECO:0000314"/>
    <property type="project" value="UniProtKB"/>
</dbReference>
<dbReference type="GO" id="GO:0003676">
    <property type="term" value="F:nucleic acid binding"/>
    <property type="evidence" value="ECO:0007669"/>
    <property type="project" value="InterPro"/>
</dbReference>
<dbReference type="GO" id="GO:0008270">
    <property type="term" value="F:zinc ion binding"/>
    <property type="evidence" value="ECO:0007669"/>
    <property type="project" value="UniProtKB-KW"/>
</dbReference>
<dbReference type="GO" id="GO:0007628">
    <property type="term" value="P:adult walking behavior"/>
    <property type="evidence" value="ECO:0000314"/>
    <property type="project" value="FlyBase"/>
</dbReference>
<dbReference type="GO" id="GO:0007612">
    <property type="term" value="P:learning"/>
    <property type="evidence" value="ECO:0000315"/>
    <property type="project" value="FlyBase"/>
</dbReference>
<dbReference type="GO" id="GO:0016319">
    <property type="term" value="P:mushroom body development"/>
    <property type="evidence" value="ECO:0000315"/>
    <property type="project" value="FlyBase"/>
</dbReference>
<dbReference type="GO" id="GO:0008355">
    <property type="term" value="P:olfactory learning"/>
    <property type="evidence" value="ECO:0000304"/>
    <property type="project" value="FlyBase"/>
</dbReference>
<dbReference type="GO" id="GO:0042274">
    <property type="term" value="P:ribosomal small subunit biogenesis"/>
    <property type="evidence" value="ECO:0000315"/>
    <property type="project" value="UniProtKB"/>
</dbReference>
<dbReference type="GO" id="GO:0007632">
    <property type="term" value="P:visual behavior"/>
    <property type="evidence" value="ECO:0000314"/>
    <property type="project" value="FlyBase"/>
</dbReference>
<dbReference type="InterPro" id="IPR001878">
    <property type="entry name" value="Znf_CCHC"/>
</dbReference>
<dbReference type="InterPro" id="IPR036875">
    <property type="entry name" value="Znf_CCHC_sf"/>
</dbReference>
<dbReference type="PANTHER" id="PTHR48209">
    <property type="entry name" value="AGL056WP"/>
    <property type="match status" value="1"/>
</dbReference>
<dbReference type="PANTHER" id="PTHR48209:SF2">
    <property type="entry name" value="FI24008P1"/>
    <property type="match status" value="1"/>
</dbReference>
<dbReference type="SMART" id="SM00343">
    <property type="entry name" value="ZnF_C2HC"/>
    <property type="match status" value="2"/>
</dbReference>
<dbReference type="SUPFAM" id="SSF57756">
    <property type="entry name" value="Retrovirus zinc finger-like domains"/>
    <property type="match status" value="1"/>
</dbReference>
<gene>
    <name evidence="8" type="primary">mbm</name>
    <name evidence="8" type="ORF">CG11604</name>
</gene>
<comment type="function">
    <text evidence="3 4">Required for small ribosomal subunit biogenesis in neuroblasts (PubMed:24615015). Plays a role in mushroom body development (PubMed:15375215).</text>
</comment>
<comment type="subcellular location">
    <subcellularLocation>
        <location evidence="3 4">Nucleus</location>
        <location evidence="3 4">Nucleolus</location>
    </subcellularLocation>
    <subcellularLocation>
        <location evidence="3 4">Cytoplasm</location>
    </subcellularLocation>
    <text evidence="4">Nuclear from interphase until early prophase and is then redistributed to the cytoplasm during mitosis when the nucleus is disassembled.</text>
</comment>
<comment type="tissue specificity">
    <text evidence="3">Shows widespread expression in third instar larval brain with no apparent difference between males and females (at protein level). Detected at low levels in the mushroom body neuropil and is also expressed in many cells of the brain outside the mushroom body (at protein level). Not detected in third instar larval brain cells in anaphase (at protein level).</text>
</comment>
<comment type="developmental stage">
    <text evidence="3">Detected in male and female third instar larvae with very low levels detected in adults (at protein level).</text>
</comment>
<comment type="PTM">
    <text evidence="4">May be phosphorylated in vivo by CkIIalpha. mbm and CkIIalpha colocalize to the nucleolus and mbm is phosphorylated in vitro by CkIIalpha.</text>
</comment>
<comment type="disruption phenotype">
    <text evidence="3 4">Lethality around pupal formation with rare escapers with a delayed eclosion time (PubMed:24615015). Reduced size of neuroblasts and ganglion mother cells with no effect on cell size in wing imaginal disks (PubMed:24615015). Grossly reduced mushroom bodies with degeneration of Kenyon cells (PubMed:15375215).</text>
</comment>
<reference evidence="9" key="1">
    <citation type="journal article" date="2000" name="Science">
        <title>The genome sequence of Drosophila melanogaster.</title>
        <authorList>
            <person name="Adams M.D."/>
            <person name="Celniker S.E."/>
            <person name="Holt R.A."/>
            <person name="Evans C.A."/>
            <person name="Gocayne J.D."/>
            <person name="Amanatides P.G."/>
            <person name="Scherer S.E."/>
            <person name="Li P.W."/>
            <person name="Hoskins R.A."/>
            <person name="Galle R.F."/>
            <person name="George R.A."/>
            <person name="Lewis S.E."/>
            <person name="Richards S."/>
            <person name="Ashburner M."/>
            <person name="Henderson S.N."/>
            <person name="Sutton G.G."/>
            <person name="Wortman J.R."/>
            <person name="Yandell M.D."/>
            <person name="Zhang Q."/>
            <person name="Chen L.X."/>
            <person name="Brandon R.C."/>
            <person name="Rogers Y.-H.C."/>
            <person name="Blazej R.G."/>
            <person name="Champe M."/>
            <person name="Pfeiffer B.D."/>
            <person name="Wan K.H."/>
            <person name="Doyle C."/>
            <person name="Baxter E.G."/>
            <person name="Helt G."/>
            <person name="Nelson C.R."/>
            <person name="Miklos G.L.G."/>
            <person name="Abril J.F."/>
            <person name="Agbayani A."/>
            <person name="An H.-J."/>
            <person name="Andrews-Pfannkoch C."/>
            <person name="Baldwin D."/>
            <person name="Ballew R.M."/>
            <person name="Basu A."/>
            <person name="Baxendale J."/>
            <person name="Bayraktaroglu L."/>
            <person name="Beasley E.M."/>
            <person name="Beeson K.Y."/>
            <person name="Benos P.V."/>
            <person name="Berman B.P."/>
            <person name="Bhandari D."/>
            <person name="Bolshakov S."/>
            <person name="Borkova D."/>
            <person name="Botchan M.R."/>
            <person name="Bouck J."/>
            <person name="Brokstein P."/>
            <person name="Brottier P."/>
            <person name="Burtis K.C."/>
            <person name="Busam D.A."/>
            <person name="Butler H."/>
            <person name="Cadieu E."/>
            <person name="Center A."/>
            <person name="Chandra I."/>
            <person name="Cherry J.M."/>
            <person name="Cawley S."/>
            <person name="Dahlke C."/>
            <person name="Davenport L.B."/>
            <person name="Davies P."/>
            <person name="de Pablos B."/>
            <person name="Delcher A."/>
            <person name="Deng Z."/>
            <person name="Mays A.D."/>
            <person name="Dew I."/>
            <person name="Dietz S.M."/>
            <person name="Dodson K."/>
            <person name="Doup L.E."/>
            <person name="Downes M."/>
            <person name="Dugan-Rocha S."/>
            <person name="Dunkov B.C."/>
            <person name="Dunn P."/>
            <person name="Durbin K.J."/>
            <person name="Evangelista C.C."/>
            <person name="Ferraz C."/>
            <person name="Ferriera S."/>
            <person name="Fleischmann W."/>
            <person name="Fosler C."/>
            <person name="Gabrielian A.E."/>
            <person name="Garg N.S."/>
            <person name="Gelbart W.M."/>
            <person name="Glasser K."/>
            <person name="Glodek A."/>
            <person name="Gong F."/>
            <person name="Gorrell J.H."/>
            <person name="Gu Z."/>
            <person name="Guan P."/>
            <person name="Harris M."/>
            <person name="Harris N.L."/>
            <person name="Harvey D.A."/>
            <person name="Heiman T.J."/>
            <person name="Hernandez J.R."/>
            <person name="Houck J."/>
            <person name="Hostin D."/>
            <person name="Houston K.A."/>
            <person name="Howland T.J."/>
            <person name="Wei M.-H."/>
            <person name="Ibegwam C."/>
            <person name="Jalali M."/>
            <person name="Kalush F."/>
            <person name="Karpen G.H."/>
            <person name="Ke Z."/>
            <person name="Kennison J.A."/>
            <person name="Ketchum K.A."/>
            <person name="Kimmel B.E."/>
            <person name="Kodira C.D."/>
            <person name="Kraft C.L."/>
            <person name="Kravitz S."/>
            <person name="Kulp D."/>
            <person name="Lai Z."/>
            <person name="Lasko P."/>
            <person name="Lei Y."/>
            <person name="Levitsky A.A."/>
            <person name="Li J.H."/>
            <person name="Li Z."/>
            <person name="Liang Y."/>
            <person name="Lin X."/>
            <person name="Liu X."/>
            <person name="Mattei B."/>
            <person name="McIntosh T.C."/>
            <person name="McLeod M.P."/>
            <person name="McPherson D."/>
            <person name="Merkulov G."/>
            <person name="Milshina N.V."/>
            <person name="Mobarry C."/>
            <person name="Morris J."/>
            <person name="Moshrefi A."/>
            <person name="Mount S.M."/>
            <person name="Moy M."/>
            <person name="Murphy B."/>
            <person name="Murphy L."/>
            <person name="Muzny D.M."/>
            <person name="Nelson D.L."/>
            <person name="Nelson D.R."/>
            <person name="Nelson K.A."/>
            <person name="Nixon K."/>
            <person name="Nusskern D.R."/>
            <person name="Pacleb J.M."/>
            <person name="Palazzolo M."/>
            <person name="Pittman G.S."/>
            <person name="Pan S."/>
            <person name="Pollard J."/>
            <person name="Puri V."/>
            <person name="Reese M.G."/>
            <person name="Reinert K."/>
            <person name="Remington K."/>
            <person name="Saunders R.D.C."/>
            <person name="Scheeler F."/>
            <person name="Shen H."/>
            <person name="Shue B.C."/>
            <person name="Siden-Kiamos I."/>
            <person name="Simpson M."/>
            <person name="Skupski M.P."/>
            <person name="Smith T.J."/>
            <person name="Spier E."/>
            <person name="Spradling A.C."/>
            <person name="Stapleton M."/>
            <person name="Strong R."/>
            <person name="Sun E."/>
            <person name="Svirskas R."/>
            <person name="Tector C."/>
            <person name="Turner R."/>
            <person name="Venter E."/>
            <person name="Wang A.H."/>
            <person name="Wang X."/>
            <person name="Wang Z.-Y."/>
            <person name="Wassarman D.A."/>
            <person name="Weinstock G.M."/>
            <person name="Weissenbach J."/>
            <person name="Williams S.M."/>
            <person name="Woodage T."/>
            <person name="Worley K.C."/>
            <person name="Wu D."/>
            <person name="Yang S."/>
            <person name="Yao Q.A."/>
            <person name="Ye J."/>
            <person name="Yeh R.-F."/>
            <person name="Zaveri J.S."/>
            <person name="Zhan M."/>
            <person name="Zhang G."/>
            <person name="Zhao Q."/>
            <person name="Zheng L."/>
            <person name="Zheng X.H."/>
            <person name="Zhong F.N."/>
            <person name="Zhong W."/>
            <person name="Zhou X."/>
            <person name="Zhu S.C."/>
            <person name="Zhu X."/>
            <person name="Smith H.O."/>
            <person name="Gibbs R.A."/>
            <person name="Myers E.W."/>
            <person name="Rubin G.M."/>
            <person name="Venter J.C."/>
        </authorList>
    </citation>
    <scope>NUCLEOTIDE SEQUENCE [LARGE SCALE GENOMIC DNA]</scope>
    <source>
        <strain evidence="9">Berkeley</strain>
    </source>
</reference>
<reference evidence="9" key="2">
    <citation type="journal article" date="2002" name="Genome Biol.">
        <title>Annotation of the Drosophila melanogaster euchromatic genome: a systematic review.</title>
        <authorList>
            <person name="Misra S."/>
            <person name="Crosby M.A."/>
            <person name="Mungall C.J."/>
            <person name="Matthews B.B."/>
            <person name="Campbell K.S."/>
            <person name="Hradecky P."/>
            <person name="Huang Y."/>
            <person name="Kaminker J.S."/>
            <person name="Millburn G.H."/>
            <person name="Prochnik S.E."/>
            <person name="Smith C.D."/>
            <person name="Tupy J.L."/>
            <person name="Whitfield E.J."/>
            <person name="Bayraktaroglu L."/>
            <person name="Berman B.P."/>
            <person name="Bettencourt B.R."/>
            <person name="Celniker S.E."/>
            <person name="de Grey A.D.N.J."/>
            <person name="Drysdale R.A."/>
            <person name="Harris N.L."/>
            <person name="Richter J."/>
            <person name="Russo S."/>
            <person name="Schroeder A.J."/>
            <person name="Shu S.Q."/>
            <person name="Stapleton M."/>
            <person name="Yamada C."/>
            <person name="Ashburner M."/>
            <person name="Gelbart W.M."/>
            <person name="Rubin G.M."/>
            <person name="Lewis S.E."/>
        </authorList>
    </citation>
    <scope>GENOME REANNOTATION</scope>
    <source>
        <strain evidence="9">Berkeley</strain>
    </source>
</reference>
<reference evidence="7" key="3">
    <citation type="journal article" date="2002" name="Genome Biol.">
        <title>A Drosophila full-length cDNA resource.</title>
        <authorList>
            <person name="Stapleton M."/>
            <person name="Carlson J.W."/>
            <person name="Brokstein P."/>
            <person name="Yu C."/>
            <person name="Champe M."/>
            <person name="George R.A."/>
            <person name="Guarin H."/>
            <person name="Kronmiller B."/>
            <person name="Pacleb J.M."/>
            <person name="Park S."/>
            <person name="Wan K.H."/>
            <person name="Rubin G.M."/>
            <person name="Celniker S.E."/>
        </authorList>
    </citation>
    <scope>NUCLEOTIDE SEQUENCE [LARGE SCALE MRNA]</scope>
    <source>
        <strain evidence="7">Berkeley</strain>
        <tissue evidence="7">Embryo</tissue>
    </source>
</reference>
<reference evidence="6" key="4">
    <citation type="journal article" date="2004" name="Proc. Natl. Acad. Sci. U.S.A.">
        <title>Identification of mushroom body miniature, a zinc-finger protein implicated in brain development of Drosophila.</title>
        <authorList>
            <person name="Raabe T."/>
            <person name="Clemens-Richter S."/>
            <person name="Twardzik T."/>
            <person name="Ebert A."/>
            <person name="Gramlich G."/>
            <person name="Heisenberg M."/>
        </authorList>
    </citation>
    <scope>FUNCTION</scope>
    <scope>SUBCELLULAR LOCATION</scope>
    <scope>TISSUE SPECIFICITY</scope>
    <scope>DEVELOPMENTAL STAGE</scope>
    <scope>DISRUPTION PHENOTYPE</scope>
</reference>
<reference evidence="6" key="5">
    <citation type="journal article" date="2014" name="Mol. Cell. Biol.">
        <title>Drosophila mbm is a nucleolar myc and casein kinase 2 target required for ribosome biogenesis and cell growth of central brain neuroblasts.</title>
        <authorList>
            <person name="Hovhanyan A."/>
            <person name="Herter E.K."/>
            <person name="Pfannstiel J."/>
            <person name="Gallant P."/>
            <person name="Raabe T."/>
        </authorList>
    </citation>
    <scope>FUNCTION</scope>
    <scope>SUBCELLULAR LOCATION</scope>
    <scope>PHOSPHORYLATION AT SER-288; SER-290; THR-292; THR-327; SER-332 AND THR-333</scope>
    <scope>DISRUPTION PHENOTYPE</scope>
    <scope>MUTAGENESIS OF SER-288; SER-290; THR-292; THR-327; SER-332 AND THR-333</scope>
</reference>
<name>MBM_DROME</name>
<protein>
    <recommendedName>
        <fullName evidence="5">Protein mushroom body miniature</fullName>
    </recommendedName>
</protein>